<proteinExistence type="evidence at transcript level"/>
<keyword id="KW-0963">Cytoplasm</keyword>
<keyword id="KW-0539">Nucleus</keyword>
<keyword id="KW-1185">Reference proteome</keyword>
<feature type="chain" id="PRO_0000439262" description="Protein HEAT-INDUCED TAS1 TARGET 4">
    <location>
        <begin position="1"/>
        <end position="280"/>
    </location>
</feature>
<sequence length="280" mass="31149">MAERLLQSMSRVAGRCHPDCVKASDEQEDYHASQNAALVAVNLISSARLILKLDAEFTEYSAQFLMDNAGKEDDPGEVDQQRNQVTTENCLRYLAENVWTKKENGQGGMDQQRPVLTVKDCLELAFKKGLPRREHWAHLGCTFKAPPFACQIPRVPVKGEVVEVKTFDEAFKLLVHQPIGAKLHLFSPQIDNVGEGVYKGLTTGNETHYVGLRDVLIASVEEFEGDSVAIVKICYKKKLSFIKVSLSVRFLSVAHDGDKSKFIAPTGLLVDFCVPRLSIN</sequence>
<name>HTT4_ARATH</name>
<organism>
    <name type="scientific">Arabidopsis thaliana</name>
    <name type="common">Mouse-ear cress</name>
    <dbReference type="NCBI Taxonomy" id="3702"/>
    <lineage>
        <taxon>Eukaryota</taxon>
        <taxon>Viridiplantae</taxon>
        <taxon>Streptophyta</taxon>
        <taxon>Embryophyta</taxon>
        <taxon>Tracheophyta</taxon>
        <taxon>Spermatophyta</taxon>
        <taxon>Magnoliopsida</taxon>
        <taxon>eudicotyledons</taxon>
        <taxon>Gunneridae</taxon>
        <taxon>Pentapetalae</taxon>
        <taxon>rosids</taxon>
        <taxon>malvids</taxon>
        <taxon>Brassicales</taxon>
        <taxon>Brassicaceae</taxon>
        <taxon>Camelineae</taxon>
        <taxon>Arabidopsis</taxon>
    </lineage>
</organism>
<accession>Q9SU75</accession>
<accession>A0A1P8B433</accession>
<reference key="1">
    <citation type="journal article" date="1999" name="Nature">
        <title>Sequence and analysis of chromosome 4 of the plant Arabidopsis thaliana.</title>
        <authorList>
            <person name="Mayer K.F.X."/>
            <person name="Schueller C."/>
            <person name="Wambutt R."/>
            <person name="Murphy G."/>
            <person name="Volckaert G."/>
            <person name="Pohl T."/>
            <person name="Duesterhoeft A."/>
            <person name="Stiekema W."/>
            <person name="Entian K.-D."/>
            <person name="Terryn N."/>
            <person name="Harris B."/>
            <person name="Ansorge W."/>
            <person name="Brandt P."/>
            <person name="Grivell L.A."/>
            <person name="Rieger M."/>
            <person name="Weichselgartner M."/>
            <person name="de Simone V."/>
            <person name="Obermaier B."/>
            <person name="Mache R."/>
            <person name="Mueller M."/>
            <person name="Kreis M."/>
            <person name="Delseny M."/>
            <person name="Puigdomenech P."/>
            <person name="Watson M."/>
            <person name="Schmidtheini T."/>
            <person name="Reichert B."/>
            <person name="Portetelle D."/>
            <person name="Perez-Alonso M."/>
            <person name="Boutry M."/>
            <person name="Bancroft I."/>
            <person name="Vos P."/>
            <person name="Hoheisel J."/>
            <person name="Zimmermann W."/>
            <person name="Wedler H."/>
            <person name="Ridley P."/>
            <person name="Langham S.-A."/>
            <person name="McCullagh B."/>
            <person name="Bilham L."/>
            <person name="Robben J."/>
            <person name="van der Schueren J."/>
            <person name="Grymonprez B."/>
            <person name="Chuang Y.-J."/>
            <person name="Vandenbussche F."/>
            <person name="Braeken M."/>
            <person name="Weltjens I."/>
            <person name="Voet M."/>
            <person name="Bastiaens I."/>
            <person name="Aert R."/>
            <person name="Defoor E."/>
            <person name="Weitzenegger T."/>
            <person name="Bothe G."/>
            <person name="Ramsperger U."/>
            <person name="Hilbert H."/>
            <person name="Braun M."/>
            <person name="Holzer E."/>
            <person name="Brandt A."/>
            <person name="Peters S."/>
            <person name="van Staveren M."/>
            <person name="Dirkse W."/>
            <person name="Mooijman P."/>
            <person name="Klein Lankhorst R."/>
            <person name="Rose M."/>
            <person name="Hauf J."/>
            <person name="Koetter P."/>
            <person name="Berneiser S."/>
            <person name="Hempel S."/>
            <person name="Feldpausch M."/>
            <person name="Lamberth S."/>
            <person name="Van den Daele H."/>
            <person name="De Keyser A."/>
            <person name="Buysshaert C."/>
            <person name="Gielen J."/>
            <person name="Villarroel R."/>
            <person name="De Clercq R."/>
            <person name="van Montagu M."/>
            <person name="Rogers J."/>
            <person name="Cronin A."/>
            <person name="Quail M.A."/>
            <person name="Bray-Allen S."/>
            <person name="Clark L."/>
            <person name="Doggett J."/>
            <person name="Hall S."/>
            <person name="Kay M."/>
            <person name="Lennard N."/>
            <person name="McLay K."/>
            <person name="Mayes R."/>
            <person name="Pettett A."/>
            <person name="Rajandream M.A."/>
            <person name="Lyne M."/>
            <person name="Benes V."/>
            <person name="Rechmann S."/>
            <person name="Borkova D."/>
            <person name="Bloecker H."/>
            <person name="Scharfe M."/>
            <person name="Grimm M."/>
            <person name="Loehnert T.-H."/>
            <person name="Dose S."/>
            <person name="de Haan M."/>
            <person name="Maarse A.C."/>
            <person name="Schaefer M."/>
            <person name="Mueller-Auer S."/>
            <person name="Gabel C."/>
            <person name="Fuchs M."/>
            <person name="Fartmann B."/>
            <person name="Granderath K."/>
            <person name="Dauner D."/>
            <person name="Herzl A."/>
            <person name="Neumann S."/>
            <person name="Argiriou A."/>
            <person name="Vitale D."/>
            <person name="Liguori R."/>
            <person name="Piravandi E."/>
            <person name="Massenet O."/>
            <person name="Quigley F."/>
            <person name="Clabauld G."/>
            <person name="Muendlein A."/>
            <person name="Felber R."/>
            <person name="Schnabl S."/>
            <person name="Hiller R."/>
            <person name="Schmidt W."/>
            <person name="Lecharny A."/>
            <person name="Aubourg S."/>
            <person name="Chefdor F."/>
            <person name="Cooke R."/>
            <person name="Berger C."/>
            <person name="Monfort A."/>
            <person name="Casacuberta E."/>
            <person name="Gibbons T."/>
            <person name="Weber N."/>
            <person name="Vandenbol M."/>
            <person name="Bargues M."/>
            <person name="Terol J."/>
            <person name="Torres A."/>
            <person name="Perez-Perez A."/>
            <person name="Purnelle B."/>
            <person name="Bent E."/>
            <person name="Johnson S."/>
            <person name="Tacon D."/>
            <person name="Jesse T."/>
            <person name="Heijnen L."/>
            <person name="Schwarz S."/>
            <person name="Scholler P."/>
            <person name="Heber S."/>
            <person name="Francs P."/>
            <person name="Bielke C."/>
            <person name="Frishman D."/>
            <person name="Haase D."/>
            <person name="Lemcke K."/>
            <person name="Mewes H.-W."/>
            <person name="Stocker S."/>
            <person name="Zaccaria P."/>
            <person name="Bevan M."/>
            <person name="Wilson R.K."/>
            <person name="de la Bastide M."/>
            <person name="Habermann K."/>
            <person name="Parnell L."/>
            <person name="Dedhia N."/>
            <person name="Gnoj L."/>
            <person name="Schutz K."/>
            <person name="Huang E."/>
            <person name="Spiegel L."/>
            <person name="Sekhon M."/>
            <person name="Murray J."/>
            <person name="Sheet P."/>
            <person name="Cordes M."/>
            <person name="Abu-Threideh J."/>
            <person name="Stoneking T."/>
            <person name="Kalicki J."/>
            <person name="Graves T."/>
            <person name="Harmon G."/>
            <person name="Edwards J."/>
            <person name="Latreille P."/>
            <person name="Courtney L."/>
            <person name="Cloud J."/>
            <person name="Abbott A."/>
            <person name="Scott K."/>
            <person name="Johnson D."/>
            <person name="Minx P."/>
            <person name="Bentley D."/>
            <person name="Fulton B."/>
            <person name="Miller N."/>
            <person name="Greco T."/>
            <person name="Kemp K."/>
            <person name="Kramer J."/>
            <person name="Fulton L."/>
            <person name="Mardis E."/>
            <person name="Dante M."/>
            <person name="Pepin K."/>
            <person name="Hillier L.W."/>
            <person name="Nelson J."/>
            <person name="Spieth J."/>
            <person name="Ryan E."/>
            <person name="Andrews S."/>
            <person name="Geisel C."/>
            <person name="Layman D."/>
            <person name="Du H."/>
            <person name="Ali J."/>
            <person name="Berghoff A."/>
            <person name="Jones K."/>
            <person name="Drone K."/>
            <person name="Cotton M."/>
            <person name="Joshu C."/>
            <person name="Antonoiu B."/>
            <person name="Zidanic M."/>
            <person name="Strong C."/>
            <person name="Sun H."/>
            <person name="Lamar B."/>
            <person name="Yordan C."/>
            <person name="Ma P."/>
            <person name="Zhong J."/>
            <person name="Preston R."/>
            <person name="Vil D."/>
            <person name="Shekher M."/>
            <person name="Matero A."/>
            <person name="Shah R."/>
            <person name="Swaby I.K."/>
            <person name="O'Shaughnessy A."/>
            <person name="Rodriguez M."/>
            <person name="Hoffman J."/>
            <person name="Till S."/>
            <person name="Granat S."/>
            <person name="Shohdy N."/>
            <person name="Hasegawa A."/>
            <person name="Hameed A."/>
            <person name="Lodhi M."/>
            <person name="Johnson A."/>
            <person name="Chen E."/>
            <person name="Marra M.A."/>
            <person name="Martienssen R."/>
            <person name="McCombie W.R."/>
        </authorList>
    </citation>
    <scope>NUCLEOTIDE SEQUENCE [LARGE SCALE GENOMIC DNA]</scope>
    <source>
        <strain>cv. Columbia</strain>
    </source>
</reference>
<reference key="2">
    <citation type="journal article" date="2017" name="Plant J.">
        <title>Araport11: a complete reannotation of the Arabidopsis thaliana reference genome.</title>
        <authorList>
            <person name="Cheng C.Y."/>
            <person name="Krishnakumar V."/>
            <person name="Chan A.P."/>
            <person name="Thibaud-Nissen F."/>
            <person name="Schobel S."/>
            <person name="Town C.D."/>
        </authorList>
    </citation>
    <scope>GENOME REANNOTATION</scope>
    <source>
        <strain>cv. Columbia</strain>
    </source>
</reference>
<reference key="3">
    <citation type="journal article" date="2010" name="Biosci. Biotechnol. Biochem.">
        <title>TAS1 trans-acting siRNA targets are differentially regulated at low temperature, and TAS1 trans-acting siRNA mediates temperature-controlled At1g51670 expression.</title>
        <authorList>
            <person name="Kume K."/>
            <person name="Tsutsumi K."/>
            <person name="Saitoh Y."/>
        </authorList>
    </citation>
    <scope>REPRESSION BY SMALL INTERFERING RNAS</scope>
    <scope>INDUCTION BY COLD</scope>
</reference>
<reference key="4">
    <citation type="journal article" date="2014" name="Plant Cell">
        <title>HEAT-INDUCED TAS1 TARGET1 Mediates Thermotolerance via HEAT STRESS TRANSCRIPTION FACTOR A1a-Directed Pathways in Arabidopsis.</title>
        <authorList>
            <person name="Li S."/>
            <person name="Liu J."/>
            <person name="Liu Z."/>
            <person name="Li X."/>
            <person name="Wu F."/>
            <person name="He Y."/>
        </authorList>
    </citation>
    <scope>INDUCTION BY HEAT SHOCK</scope>
    <scope>TISSUE SPECIFICITY</scope>
    <source>
        <strain>cv. Columbia</strain>
        <strain>cv. Wassilewskija</strain>
    </source>
</reference>
<protein>
    <recommendedName>
        <fullName evidence="4">Protein HEAT-INDUCED TAS1 TARGET 4</fullName>
    </recommendedName>
</protein>
<evidence type="ECO:0000250" key="1">
    <source>
        <dbReference type="UniProtKB" id="Q8LFW5"/>
    </source>
</evidence>
<evidence type="ECO:0000269" key="2">
    <source>
    </source>
</evidence>
<evidence type="ECO:0000269" key="3">
    <source>
    </source>
</evidence>
<evidence type="ECO:0000303" key="4">
    <source>
    </source>
</evidence>
<evidence type="ECO:0000305" key="5"/>
<evidence type="ECO:0000312" key="6">
    <source>
        <dbReference type="Araport" id="AT4G29760"/>
    </source>
</evidence>
<evidence type="ECO:0000312" key="7">
    <source>
        <dbReference type="EMBL" id="CAB45336.1"/>
    </source>
</evidence>
<dbReference type="EMBL" id="AL079344">
    <property type="protein sequence ID" value="CAB45336.1"/>
    <property type="molecule type" value="Genomic_DNA"/>
</dbReference>
<dbReference type="EMBL" id="AL161575">
    <property type="protein sequence ID" value="CAB79734.1"/>
    <property type="molecule type" value="Genomic_DNA"/>
</dbReference>
<dbReference type="EMBL" id="CP002687">
    <property type="protein sequence ID" value="AEE85672.1"/>
    <property type="molecule type" value="Genomic_DNA"/>
</dbReference>
<dbReference type="EMBL" id="CP002687">
    <property type="protein sequence ID" value="ANM66342.1"/>
    <property type="molecule type" value="Genomic_DNA"/>
</dbReference>
<dbReference type="PIR" id="T09939">
    <property type="entry name" value="T09939"/>
</dbReference>
<dbReference type="RefSeq" id="NP_001320086.1">
    <property type="nucleotide sequence ID" value="NM_001341979.1"/>
</dbReference>
<dbReference type="RefSeq" id="NP_194705.1">
    <property type="nucleotide sequence ID" value="NM_119122.2"/>
</dbReference>
<dbReference type="SMR" id="Q9SU75"/>
<dbReference type="STRING" id="3702.Q9SU75"/>
<dbReference type="PaxDb" id="3702-AT4G29760.1"/>
<dbReference type="ProteomicsDB" id="232113"/>
<dbReference type="DNASU" id="829098"/>
<dbReference type="EnsemblPlants" id="AT4G29760.1">
    <property type="protein sequence ID" value="AT4G29760.1"/>
    <property type="gene ID" value="AT4G29760"/>
</dbReference>
<dbReference type="EnsemblPlants" id="AT4G29760.2">
    <property type="protein sequence ID" value="AT4G29760.2"/>
    <property type="gene ID" value="AT4G29760"/>
</dbReference>
<dbReference type="GeneID" id="829098"/>
<dbReference type="Gramene" id="AT4G29760.1">
    <property type="protein sequence ID" value="AT4G29760.1"/>
    <property type="gene ID" value="AT4G29760"/>
</dbReference>
<dbReference type="Gramene" id="AT4G29760.2">
    <property type="protein sequence ID" value="AT4G29760.2"/>
    <property type="gene ID" value="AT4G29760"/>
</dbReference>
<dbReference type="KEGG" id="ath:AT4G29760"/>
<dbReference type="Araport" id="AT4G29760"/>
<dbReference type="TAIR" id="AT4G29760">
    <property type="gene designation" value="HTT4"/>
</dbReference>
<dbReference type="HOGENOM" id="CLU_1005918_0_0_1"/>
<dbReference type="InParanoid" id="Q9SU75"/>
<dbReference type="OMA" id="GNETHYV"/>
<dbReference type="PhylomeDB" id="Q9SU75"/>
<dbReference type="PRO" id="PR:Q9SU75"/>
<dbReference type="Proteomes" id="UP000006548">
    <property type="component" value="Chromosome 4"/>
</dbReference>
<dbReference type="ExpressionAtlas" id="Q9SU75">
    <property type="expression patterns" value="baseline and differential"/>
</dbReference>
<dbReference type="GO" id="GO:0005737">
    <property type="term" value="C:cytoplasm"/>
    <property type="evidence" value="ECO:0000250"/>
    <property type="project" value="UniProtKB"/>
</dbReference>
<dbReference type="GO" id="GO:0005634">
    <property type="term" value="C:nucleus"/>
    <property type="evidence" value="ECO:0000250"/>
    <property type="project" value="UniProtKB"/>
</dbReference>
<dbReference type="GO" id="GO:0010286">
    <property type="term" value="P:heat acclimation"/>
    <property type="evidence" value="ECO:0000250"/>
    <property type="project" value="UniProtKB"/>
</dbReference>
<dbReference type="GO" id="GO:0009409">
    <property type="term" value="P:response to cold"/>
    <property type="evidence" value="ECO:0000270"/>
    <property type="project" value="UniProtKB"/>
</dbReference>
<dbReference type="GO" id="GO:0009408">
    <property type="term" value="P:response to heat"/>
    <property type="evidence" value="ECO:0000270"/>
    <property type="project" value="UniProtKB"/>
</dbReference>
<comment type="function">
    <text evidence="1">Mediates both basal and acquired thermotolerance.</text>
</comment>
<comment type="subcellular location">
    <subcellularLocation>
        <location evidence="1">Cytoplasm</location>
    </subcellularLocation>
    <subcellularLocation>
        <location evidence="1">Nucleus</location>
    </subcellularLocation>
</comment>
<comment type="tissue specificity">
    <text evidence="3">Expressed in seedlings, leaves, stems, inflorescences and siliques.</text>
</comment>
<comment type="induction">
    <text evidence="2 3">Target of TAS1 (trans-acting siRNA precursor 1)-derived small interfering RNAs in response to temperature variations. Up-regulated by cold (at 4 degrees Celsius), but rapid drop of expression after a temperature shift to room temperature (at 22 degrees Celsius) (PubMed:20622450). Highly up-regulated in seedlings exposed to heat shock (PubMed:24728648).</text>
</comment>
<comment type="similarity">
    <text evidence="5">Belongs to the heat induced plant HTT protein family.</text>
</comment>
<gene>
    <name evidence="4" type="primary">HTT4</name>
    <name evidence="6" type="ordered locus">At4g29760</name>
    <name evidence="7" type="ORF">T16L4.270</name>
</gene>